<name>ENO_PENCI</name>
<sequence length="438" mass="47275">MPIAKVHARSVYVSRGNPTVEVDVVTETGLHRAIVPSGASTGQHEAVELRDGDKAKWGGKGVLKAVKNVNETIGPALIKENIDVKDQAKVDEFLNKLDGTANKGNLGANAILGVSLAIAKAAAAEKGVPLYVHISDLAGTKKPYVLPVPFQNVLNGGSHAGGRLAFQEFMIVPDTAESFSEGLRQGAEVYQKLKALAKKKYGQSAGNVGDEGGVAPDIQTAEEALDLITEAIEQAGYTGKISIAMDVASSEFYKTDAKKYDLDFKNPDSDPTKWLTYEQLADLYKSLAAKYPIVSIEDPFAEDDWEAWSYFYKTSDFQIVGDDLTVTNPLRIKKAIELKSCNALLLKVNQIGTLTESIQAAKDSYADNWGVMVSHRSGETEDVTIADIAVGLRSGQIKTGAPARSERLAKLNQILRIEEELGENAIYAGKNFRTSVNL</sequence>
<gene>
    <name type="primary">enoA</name>
</gene>
<dbReference type="EC" id="4.2.1.11"/>
<dbReference type="EMBL" id="AF254643">
    <property type="protein sequence ID" value="AAK51201.1"/>
    <property type="molecule type" value="mRNA"/>
</dbReference>
<dbReference type="SMR" id="Q96X46"/>
<dbReference type="Allergome" id="3403">
    <property type="allergen name" value="Pen c 22.0101"/>
</dbReference>
<dbReference type="Allergome" id="522">
    <property type="allergen name" value="Pen c 22"/>
</dbReference>
<dbReference type="UniPathway" id="UPA00109">
    <property type="reaction ID" value="UER00187"/>
</dbReference>
<dbReference type="GO" id="GO:0000015">
    <property type="term" value="C:phosphopyruvate hydratase complex"/>
    <property type="evidence" value="ECO:0007669"/>
    <property type="project" value="InterPro"/>
</dbReference>
<dbReference type="GO" id="GO:0000287">
    <property type="term" value="F:magnesium ion binding"/>
    <property type="evidence" value="ECO:0007669"/>
    <property type="project" value="InterPro"/>
</dbReference>
<dbReference type="GO" id="GO:0004634">
    <property type="term" value="F:phosphopyruvate hydratase activity"/>
    <property type="evidence" value="ECO:0007669"/>
    <property type="project" value="UniProtKB-EC"/>
</dbReference>
<dbReference type="GO" id="GO:0006096">
    <property type="term" value="P:glycolytic process"/>
    <property type="evidence" value="ECO:0007669"/>
    <property type="project" value="UniProtKB-UniPathway"/>
</dbReference>
<dbReference type="CDD" id="cd03313">
    <property type="entry name" value="enolase"/>
    <property type="match status" value="1"/>
</dbReference>
<dbReference type="FunFam" id="3.30.390.10:FF:000001">
    <property type="entry name" value="Enolase"/>
    <property type="match status" value="1"/>
</dbReference>
<dbReference type="FunFam" id="3.20.20.120:FF:000002">
    <property type="entry name" value="Enolase 1"/>
    <property type="match status" value="1"/>
</dbReference>
<dbReference type="Gene3D" id="3.20.20.120">
    <property type="entry name" value="Enolase-like C-terminal domain"/>
    <property type="match status" value="1"/>
</dbReference>
<dbReference type="Gene3D" id="3.30.390.10">
    <property type="entry name" value="Enolase-like, N-terminal domain"/>
    <property type="match status" value="1"/>
</dbReference>
<dbReference type="HAMAP" id="MF_00318">
    <property type="entry name" value="Enolase"/>
    <property type="match status" value="1"/>
</dbReference>
<dbReference type="InterPro" id="IPR000941">
    <property type="entry name" value="Enolase"/>
</dbReference>
<dbReference type="InterPro" id="IPR036849">
    <property type="entry name" value="Enolase-like_C_sf"/>
</dbReference>
<dbReference type="InterPro" id="IPR029017">
    <property type="entry name" value="Enolase-like_N"/>
</dbReference>
<dbReference type="InterPro" id="IPR020810">
    <property type="entry name" value="Enolase_C"/>
</dbReference>
<dbReference type="InterPro" id="IPR020809">
    <property type="entry name" value="Enolase_CS"/>
</dbReference>
<dbReference type="InterPro" id="IPR020811">
    <property type="entry name" value="Enolase_N"/>
</dbReference>
<dbReference type="NCBIfam" id="TIGR01060">
    <property type="entry name" value="eno"/>
    <property type="match status" value="1"/>
</dbReference>
<dbReference type="PANTHER" id="PTHR11902">
    <property type="entry name" value="ENOLASE"/>
    <property type="match status" value="1"/>
</dbReference>
<dbReference type="PANTHER" id="PTHR11902:SF1">
    <property type="entry name" value="ENOLASE"/>
    <property type="match status" value="1"/>
</dbReference>
<dbReference type="Pfam" id="PF00113">
    <property type="entry name" value="Enolase_C"/>
    <property type="match status" value="1"/>
</dbReference>
<dbReference type="Pfam" id="PF03952">
    <property type="entry name" value="Enolase_N"/>
    <property type="match status" value="1"/>
</dbReference>
<dbReference type="PIRSF" id="PIRSF001400">
    <property type="entry name" value="Enolase"/>
    <property type="match status" value="1"/>
</dbReference>
<dbReference type="PRINTS" id="PR00148">
    <property type="entry name" value="ENOLASE"/>
</dbReference>
<dbReference type="SFLD" id="SFLDF00002">
    <property type="entry name" value="enolase"/>
    <property type="match status" value="1"/>
</dbReference>
<dbReference type="SFLD" id="SFLDG00178">
    <property type="entry name" value="enolase"/>
    <property type="match status" value="1"/>
</dbReference>
<dbReference type="SMART" id="SM01192">
    <property type="entry name" value="Enolase_C"/>
    <property type="match status" value="1"/>
</dbReference>
<dbReference type="SMART" id="SM01193">
    <property type="entry name" value="Enolase_N"/>
    <property type="match status" value="1"/>
</dbReference>
<dbReference type="SUPFAM" id="SSF51604">
    <property type="entry name" value="Enolase C-terminal domain-like"/>
    <property type="match status" value="1"/>
</dbReference>
<dbReference type="SUPFAM" id="SSF54826">
    <property type="entry name" value="Enolase N-terminal domain-like"/>
    <property type="match status" value="1"/>
</dbReference>
<dbReference type="PROSITE" id="PS00164">
    <property type="entry name" value="ENOLASE"/>
    <property type="match status" value="1"/>
</dbReference>
<organism>
    <name type="scientific">Penicillium citrinum</name>
    <dbReference type="NCBI Taxonomy" id="5077"/>
    <lineage>
        <taxon>Eukaryota</taxon>
        <taxon>Fungi</taxon>
        <taxon>Dikarya</taxon>
        <taxon>Ascomycota</taxon>
        <taxon>Pezizomycotina</taxon>
        <taxon>Eurotiomycetes</taxon>
        <taxon>Eurotiomycetidae</taxon>
        <taxon>Eurotiales</taxon>
        <taxon>Aspergillaceae</taxon>
        <taxon>Penicillium</taxon>
    </lineage>
</organism>
<reference key="1">
    <citation type="journal article" date="2002" name="Int. Arch. Allergy Immunol.">
        <title>cDNA cloning and immunological characterization of a newly identified enolase allergen from Penicillium citrinum and Aspergillus fumigatus.</title>
        <authorList>
            <person name="Lai H.-Y."/>
            <person name="Tam M.F."/>
            <person name="Tang R.-B."/>
            <person name="Chou H."/>
            <person name="Chang C.-Y."/>
            <person name="Tsai J.-J."/>
            <person name="Shen H.-D."/>
        </authorList>
    </citation>
    <scope>NUCLEOTIDE SEQUENCE [MRNA]</scope>
    <scope>PROTEIN SEQUENCE OF 2-22</scope>
    <scope>ALLERGEN</scope>
    <source>
        <strain>52-5</strain>
    </source>
</reference>
<comment type="catalytic activity">
    <reaction>
        <text>(2R)-2-phosphoglycerate = phosphoenolpyruvate + H2O</text>
        <dbReference type="Rhea" id="RHEA:10164"/>
        <dbReference type="ChEBI" id="CHEBI:15377"/>
        <dbReference type="ChEBI" id="CHEBI:58289"/>
        <dbReference type="ChEBI" id="CHEBI:58702"/>
        <dbReference type="EC" id="4.2.1.11"/>
    </reaction>
</comment>
<comment type="cofactor">
    <cofactor evidence="1">
        <name>Mg(2+)</name>
        <dbReference type="ChEBI" id="CHEBI:18420"/>
    </cofactor>
    <text evidence="1">Mg(2+) is required for catalysis and for stabilizing the dimer.</text>
</comment>
<comment type="pathway">
    <text>Carbohydrate degradation; glycolysis; pyruvate from D-glyceraldehyde 3-phosphate: step 4/5.</text>
</comment>
<comment type="subunit">
    <text evidence="1">Homodimer.</text>
</comment>
<comment type="subcellular location">
    <subcellularLocation>
        <location evidence="1">Cytoplasm</location>
    </subcellularLocation>
</comment>
<comment type="allergen">
    <text evidence="2">Causes an allergic reaction in human. Binds to IgE.</text>
</comment>
<comment type="similarity">
    <text evidence="3">Belongs to the enolase family.</text>
</comment>
<evidence type="ECO:0000250" key="1"/>
<evidence type="ECO:0000269" key="2">
    <source>
    </source>
</evidence>
<evidence type="ECO:0000305" key="3"/>
<accession>Q96X46</accession>
<proteinExistence type="evidence at protein level"/>
<keyword id="KW-0020">Allergen</keyword>
<keyword id="KW-0963">Cytoplasm</keyword>
<keyword id="KW-0903">Direct protein sequencing</keyword>
<keyword id="KW-0324">Glycolysis</keyword>
<keyword id="KW-0456">Lyase</keyword>
<keyword id="KW-0460">Magnesium</keyword>
<keyword id="KW-0479">Metal-binding</keyword>
<protein>
    <recommendedName>
        <fullName>Enolase</fullName>
        <ecNumber>4.2.1.11</ecNumber>
    </recommendedName>
    <alternativeName>
        <fullName>2-phospho-D-glycerate hydro-lyase</fullName>
    </alternativeName>
    <alternativeName>
        <fullName>2-phosphoglycerate dehydratase</fullName>
    </alternativeName>
    <allergenName>Pen c 22</allergenName>
</protein>
<feature type="initiator methionine" description="Removed" evidence="2">
    <location>
        <position position="1"/>
    </location>
</feature>
<feature type="chain" id="PRO_0000134056" description="Enolase">
    <location>
        <begin position="2"/>
        <end position="438"/>
    </location>
</feature>
<feature type="active site" description="Proton donor" evidence="1">
    <location>
        <position position="211"/>
    </location>
</feature>
<feature type="active site" description="Proton acceptor" evidence="1">
    <location>
        <position position="347"/>
    </location>
</feature>
<feature type="binding site" evidence="1">
    <location>
        <position position="159"/>
    </location>
    <ligand>
        <name>substrate</name>
    </ligand>
</feature>
<feature type="binding site" evidence="1">
    <location>
        <position position="168"/>
    </location>
    <ligand>
        <name>substrate</name>
    </ligand>
</feature>
<feature type="binding site" evidence="1">
    <location>
        <position position="246"/>
    </location>
    <ligand>
        <name>Mg(2+)</name>
        <dbReference type="ChEBI" id="CHEBI:18420"/>
    </ligand>
</feature>
<feature type="binding site" evidence="1">
    <location>
        <position position="297"/>
    </location>
    <ligand>
        <name>Mg(2+)</name>
        <dbReference type="ChEBI" id="CHEBI:18420"/>
    </ligand>
</feature>
<feature type="binding site" evidence="1">
    <location>
        <position position="297"/>
    </location>
    <ligand>
        <name>substrate</name>
    </ligand>
</feature>
<feature type="binding site" evidence="1">
    <location>
        <position position="322"/>
    </location>
    <ligand>
        <name>Mg(2+)</name>
        <dbReference type="ChEBI" id="CHEBI:18420"/>
    </ligand>
</feature>
<feature type="binding site" evidence="1">
    <location>
        <position position="322"/>
    </location>
    <ligand>
        <name>substrate</name>
    </ligand>
</feature>
<feature type="binding site" evidence="1">
    <location>
        <begin position="374"/>
        <end position="377"/>
    </location>
    <ligand>
        <name>substrate</name>
    </ligand>
</feature>
<feature type="binding site" evidence="1">
    <location>
        <position position="398"/>
    </location>
    <ligand>
        <name>substrate</name>
    </ligand>
</feature>